<organism>
    <name type="scientific">Francisella tularensis subsp. holarctica (strain LVS)</name>
    <dbReference type="NCBI Taxonomy" id="376619"/>
    <lineage>
        <taxon>Bacteria</taxon>
        <taxon>Pseudomonadati</taxon>
        <taxon>Pseudomonadota</taxon>
        <taxon>Gammaproteobacteria</taxon>
        <taxon>Thiotrichales</taxon>
        <taxon>Francisellaceae</taxon>
        <taxon>Francisella</taxon>
    </lineage>
</organism>
<protein>
    <recommendedName>
        <fullName evidence="1">4-hydroxy-3-methylbut-2-enyl diphosphate reductase</fullName>
        <shortName evidence="1">HMBPP reductase</shortName>
        <ecNumber evidence="1">1.17.7.4</ecNumber>
    </recommendedName>
</protein>
<reference key="1">
    <citation type="submission" date="2006-03" db="EMBL/GenBank/DDBJ databases">
        <title>Complete genome sequence of Francisella tularensis LVS (Live Vaccine Strain).</title>
        <authorList>
            <person name="Chain P."/>
            <person name="Larimer F."/>
            <person name="Land M."/>
            <person name="Stilwagen S."/>
            <person name="Larsson P."/>
            <person name="Bearden S."/>
            <person name="Chu M."/>
            <person name="Oyston P."/>
            <person name="Forsman M."/>
            <person name="Andersson S."/>
            <person name="Lindler L."/>
            <person name="Titball R."/>
            <person name="Garcia E."/>
        </authorList>
    </citation>
    <scope>NUCLEOTIDE SEQUENCE [LARGE SCALE GENOMIC DNA]</scope>
    <source>
        <strain>LVS</strain>
    </source>
</reference>
<evidence type="ECO:0000255" key="1">
    <source>
        <dbReference type="HAMAP-Rule" id="MF_00191"/>
    </source>
</evidence>
<feature type="chain" id="PRO_1000021122" description="4-hydroxy-3-methylbut-2-enyl diphosphate reductase">
    <location>
        <begin position="1"/>
        <end position="318"/>
    </location>
</feature>
<feature type="active site" description="Proton donor" evidence="1">
    <location>
        <position position="126"/>
    </location>
</feature>
<feature type="binding site" evidence="1">
    <location>
        <position position="12"/>
    </location>
    <ligand>
        <name>[4Fe-4S] cluster</name>
        <dbReference type="ChEBI" id="CHEBI:49883"/>
    </ligand>
</feature>
<feature type="binding site" evidence="1">
    <location>
        <position position="41"/>
    </location>
    <ligand>
        <name>(2E)-4-hydroxy-3-methylbut-2-enyl diphosphate</name>
        <dbReference type="ChEBI" id="CHEBI:128753"/>
    </ligand>
</feature>
<feature type="binding site" evidence="1">
    <location>
        <position position="41"/>
    </location>
    <ligand>
        <name>dimethylallyl diphosphate</name>
        <dbReference type="ChEBI" id="CHEBI:57623"/>
    </ligand>
</feature>
<feature type="binding site" evidence="1">
    <location>
        <position position="41"/>
    </location>
    <ligand>
        <name>isopentenyl diphosphate</name>
        <dbReference type="ChEBI" id="CHEBI:128769"/>
    </ligand>
</feature>
<feature type="binding site" evidence="1">
    <location>
        <position position="74"/>
    </location>
    <ligand>
        <name>(2E)-4-hydroxy-3-methylbut-2-enyl diphosphate</name>
        <dbReference type="ChEBI" id="CHEBI:128753"/>
    </ligand>
</feature>
<feature type="binding site" evidence="1">
    <location>
        <position position="74"/>
    </location>
    <ligand>
        <name>dimethylallyl diphosphate</name>
        <dbReference type="ChEBI" id="CHEBI:57623"/>
    </ligand>
</feature>
<feature type="binding site" evidence="1">
    <location>
        <position position="74"/>
    </location>
    <ligand>
        <name>isopentenyl diphosphate</name>
        <dbReference type="ChEBI" id="CHEBI:128769"/>
    </ligand>
</feature>
<feature type="binding site" evidence="1">
    <location>
        <position position="96"/>
    </location>
    <ligand>
        <name>[4Fe-4S] cluster</name>
        <dbReference type="ChEBI" id="CHEBI:49883"/>
    </ligand>
</feature>
<feature type="binding site" evidence="1">
    <location>
        <position position="124"/>
    </location>
    <ligand>
        <name>(2E)-4-hydroxy-3-methylbut-2-enyl diphosphate</name>
        <dbReference type="ChEBI" id="CHEBI:128753"/>
    </ligand>
</feature>
<feature type="binding site" evidence="1">
    <location>
        <position position="124"/>
    </location>
    <ligand>
        <name>dimethylallyl diphosphate</name>
        <dbReference type="ChEBI" id="CHEBI:57623"/>
    </ligand>
</feature>
<feature type="binding site" evidence="1">
    <location>
        <position position="124"/>
    </location>
    <ligand>
        <name>isopentenyl diphosphate</name>
        <dbReference type="ChEBI" id="CHEBI:128769"/>
    </ligand>
</feature>
<feature type="binding site" evidence="1">
    <location>
        <position position="167"/>
    </location>
    <ligand>
        <name>(2E)-4-hydroxy-3-methylbut-2-enyl diphosphate</name>
        <dbReference type="ChEBI" id="CHEBI:128753"/>
    </ligand>
</feature>
<feature type="binding site" evidence="1">
    <location>
        <position position="197"/>
    </location>
    <ligand>
        <name>[4Fe-4S] cluster</name>
        <dbReference type="ChEBI" id="CHEBI:49883"/>
    </ligand>
</feature>
<feature type="binding site" evidence="1">
    <location>
        <position position="225"/>
    </location>
    <ligand>
        <name>(2E)-4-hydroxy-3-methylbut-2-enyl diphosphate</name>
        <dbReference type="ChEBI" id="CHEBI:128753"/>
    </ligand>
</feature>
<feature type="binding site" evidence="1">
    <location>
        <position position="225"/>
    </location>
    <ligand>
        <name>dimethylallyl diphosphate</name>
        <dbReference type="ChEBI" id="CHEBI:57623"/>
    </ligand>
</feature>
<feature type="binding site" evidence="1">
    <location>
        <position position="225"/>
    </location>
    <ligand>
        <name>isopentenyl diphosphate</name>
        <dbReference type="ChEBI" id="CHEBI:128769"/>
    </ligand>
</feature>
<feature type="binding site" evidence="1">
    <location>
        <position position="226"/>
    </location>
    <ligand>
        <name>(2E)-4-hydroxy-3-methylbut-2-enyl diphosphate</name>
        <dbReference type="ChEBI" id="CHEBI:128753"/>
    </ligand>
</feature>
<feature type="binding site" evidence="1">
    <location>
        <position position="226"/>
    </location>
    <ligand>
        <name>dimethylallyl diphosphate</name>
        <dbReference type="ChEBI" id="CHEBI:57623"/>
    </ligand>
</feature>
<feature type="binding site" evidence="1">
    <location>
        <position position="226"/>
    </location>
    <ligand>
        <name>isopentenyl diphosphate</name>
        <dbReference type="ChEBI" id="CHEBI:128769"/>
    </ligand>
</feature>
<feature type="binding site" evidence="1">
    <location>
        <position position="227"/>
    </location>
    <ligand>
        <name>(2E)-4-hydroxy-3-methylbut-2-enyl diphosphate</name>
        <dbReference type="ChEBI" id="CHEBI:128753"/>
    </ligand>
</feature>
<feature type="binding site" evidence="1">
    <location>
        <position position="227"/>
    </location>
    <ligand>
        <name>dimethylallyl diphosphate</name>
        <dbReference type="ChEBI" id="CHEBI:57623"/>
    </ligand>
</feature>
<feature type="binding site" evidence="1">
    <location>
        <position position="227"/>
    </location>
    <ligand>
        <name>isopentenyl diphosphate</name>
        <dbReference type="ChEBI" id="CHEBI:128769"/>
    </ligand>
</feature>
<feature type="binding site" evidence="1">
    <location>
        <position position="269"/>
    </location>
    <ligand>
        <name>(2E)-4-hydroxy-3-methylbut-2-enyl diphosphate</name>
        <dbReference type="ChEBI" id="CHEBI:128753"/>
    </ligand>
</feature>
<feature type="binding site" evidence="1">
    <location>
        <position position="269"/>
    </location>
    <ligand>
        <name>dimethylallyl diphosphate</name>
        <dbReference type="ChEBI" id="CHEBI:57623"/>
    </ligand>
</feature>
<feature type="binding site" evidence="1">
    <location>
        <position position="269"/>
    </location>
    <ligand>
        <name>isopentenyl diphosphate</name>
        <dbReference type="ChEBI" id="CHEBI:128769"/>
    </ligand>
</feature>
<comment type="function">
    <text evidence="1">Catalyzes the conversion of 1-hydroxy-2-methyl-2-(E)-butenyl 4-diphosphate (HMBPP) into a mixture of isopentenyl diphosphate (IPP) and dimethylallyl diphosphate (DMAPP). Acts in the terminal step of the DOXP/MEP pathway for isoprenoid precursor biosynthesis.</text>
</comment>
<comment type="catalytic activity">
    <reaction evidence="1">
        <text>isopentenyl diphosphate + 2 oxidized [2Fe-2S]-[ferredoxin] + H2O = (2E)-4-hydroxy-3-methylbut-2-enyl diphosphate + 2 reduced [2Fe-2S]-[ferredoxin] + 2 H(+)</text>
        <dbReference type="Rhea" id="RHEA:24488"/>
        <dbReference type="Rhea" id="RHEA-COMP:10000"/>
        <dbReference type="Rhea" id="RHEA-COMP:10001"/>
        <dbReference type="ChEBI" id="CHEBI:15377"/>
        <dbReference type="ChEBI" id="CHEBI:15378"/>
        <dbReference type="ChEBI" id="CHEBI:33737"/>
        <dbReference type="ChEBI" id="CHEBI:33738"/>
        <dbReference type="ChEBI" id="CHEBI:128753"/>
        <dbReference type="ChEBI" id="CHEBI:128769"/>
        <dbReference type="EC" id="1.17.7.4"/>
    </reaction>
</comment>
<comment type="catalytic activity">
    <reaction evidence="1">
        <text>dimethylallyl diphosphate + 2 oxidized [2Fe-2S]-[ferredoxin] + H2O = (2E)-4-hydroxy-3-methylbut-2-enyl diphosphate + 2 reduced [2Fe-2S]-[ferredoxin] + 2 H(+)</text>
        <dbReference type="Rhea" id="RHEA:24825"/>
        <dbReference type="Rhea" id="RHEA-COMP:10000"/>
        <dbReference type="Rhea" id="RHEA-COMP:10001"/>
        <dbReference type="ChEBI" id="CHEBI:15377"/>
        <dbReference type="ChEBI" id="CHEBI:15378"/>
        <dbReference type="ChEBI" id="CHEBI:33737"/>
        <dbReference type="ChEBI" id="CHEBI:33738"/>
        <dbReference type="ChEBI" id="CHEBI:57623"/>
        <dbReference type="ChEBI" id="CHEBI:128753"/>
        <dbReference type="EC" id="1.17.7.4"/>
    </reaction>
</comment>
<comment type="cofactor">
    <cofactor evidence="1">
        <name>[4Fe-4S] cluster</name>
        <dbReference type="ChEBI" id="CHEBI:49883"/>
    </cofactor>
    <text evidence="1">Binds 1 [4Fe-4S] cluster per subunit.</text>
</comment>
<comment type="pathway">
    <text evidence="1">Isoprenoid biosynthesis; dimethylallyl diphosphate biosynthesis; dimethylallyl diphosphate from (2E)-4-hydroxy-3-methylbutenyl diphosphate: step 1/1.</text>
</comment>
<comment type="pathway">
    <text evidence="1">Isoprenoid biosynthesis; isopentenyl diphosphate biosynthesis via DXP pathway; isopentenyl diphosphate from 1-deoxy-D-xylulose 5-phosphate: step 6/6.</text>
</comment>
<comment type="similarity">
    <text evidence="1">Belongs to the IspH family.</text>
</comment>
<sequence length="318" mass="35162">MKILLANPRGFCAGVSRAVETVEKVLEVEKSPVYVRHEVVHNKVVVDSLKKKGVVFVKEVDEVPDDAVCIFSAHGVSLKVEEAAAKKNLVLYDATCPLVTKVHRGVRLASNNDAECILIGHKGHPEVQGTMGQYRSKKGAIYLIESEEDLNKLTIKDPDNLYYATQTTLSVDETHGIIQALKDKYPNIKGPKKEDICYATQNRQTAIKAMLKHIDVLVVVGSQNSSNSNRLKELATLEGIDAYLVDNPKDVDKLWFDNKKVCGVSAGASAPEYLVQQIISQISKVCSTEVEEFEGIKEEVYFPLPRLLKQKIGTGKVE</sequence>
<dbReference type="EC" id="1.17.7.4" evidence="1"/>
<dbReference type="EMBL" id="AM233362">
    <property type="protein sequence ID" value="CAJ78767.1"/>
    <property type="molecule type" value="Genomic_DNA"/>
</dbReference>
<dbReference type="RefSeq" id="WP_003018366.1">
    <property type="nucleotide sequence ID" value="NZ_CP009694.1"/>
</dbReference>
<dbReference type="SMR" id="Q2A587"/>
<dbReference type="KEGG" id="ftl:FTL_0327"/>
<dbReference type="UniPathway" id="UPA00056">
    <property type="reaction ID" value="UER00097"/>
</dbReference>
<dbReference type="UniPathway" id="UPA00059">
    <property type="reaction ID" value="UER00105"/>
</dbReference>
<dbReference type="Proteomes" id="UP000001944">
    <property type="component" value="Chromosome"/>
</dbReference>
<dbReference type="GO" id="GO:0051539">
    <property type="term" value="F:4 iron, 4 sulfur cluster binding"/>
    <property type="evidence" value="ECO:0007669"/>
    <property type="project" value="UniProtKB-UniRule"/>
</dbReference>
<dbReference type="GO" id="GO:0051745">
    <property type="term" value="F:4-hydroxy-3-methylbut-2-enyl diphosphate reductase activity"/>
    <property type="evidence" value="ECO:0007669"/>
    <property type="project" value="UniProtKB-UniRule"/>
</dbReference>
<dbReference type="GO" id="GO:0046872">
    <property type="term" value="F:metal ion binding"/>
    <property type="evidence" value="ECO:0007669"/>
    <property type="project" value="UniProtKB-KW"/>
</dbReference>
<dbReference type="GO" id="GO:0050992">
    <property type="term" value="P:dimethylallyl diphosphate biosynthetic process"/>
    <property type="evidence" value="ECO:0007669"/>
    <property type="project" value="UniProtKB-UniRule"/>
</dbReference>
<dbReference type="GO" id="GO:0019288">
    <property type="term" value="P:isopentenyl diphosphate biosynthetic process, methylerythritol 4-phosphate pathway"/>
    <property type="evidence" value="ECO:0007669"/>
    <property type="project" value="UniProtKB-UniRule"/>
</dbReference>
<dbReference type="GO" id="GO:0016114">
    <property type="term" value="P:terpenoid biosynthetic process"/>
    <property type="evidence" value="ECO:0007669"/>
    <property type="project" value="UniProtKB-UniRule"/>
</dbReference>
<dbReference type="CDD" id="cd13944">
    <property type="entry name" value="lytB_ispH"/>
    <property type="match status" value="1"/>
</dbReference>
<dbReference type="Gene3D" id="3.40.50.11270">
    <property type="match status" value="1"/>
</dbReference>
<dbReference type="Gene3D" id="3.40.1010.20">
    <property type="entry name" value="4-hydroxy-3-methylbut-2-enyl diphosphate reductase, catalytic domain"/>
    <property type="match status" value="2"/>
</dbReference>
<dbReference type="HAMAP" id="MF_00191">
    <property type="entry name" value="IspH"/>
    <property type="match status" value="1"/>
</dbReference>
<dbReference type="InterPro" id="IPR003451">
    <property type="entry name" value="LytB/IspH"/>
</dbReference>
<dbReference type="NCBIfam" id="TIGR00216">
    <property type="entry name" value="ispH_lytB"/>
    <property type="match status" value="1"/>
</dbReference>
<dbReference type="NCBIfam" id="NF002188">
    <property type="entry name" value="PRK01045.1-2"/>
    <property type="match status" value="1"/>
</dbReference>
<dbReference type="NCBIfam" id="NF002190">
    <property type="entry name" value="PRK01045.1-4"/>
    <property type="match status" value="1"/>
</dbReference>
<dbReference type="PANTHER" id="PTHR30426">
    <property type="entry name" value="4-HYDROXY-3-METHYLBUT-2-ENYL DIPHOSPHATE REDUCTASE"/>
    <property type="match status" value="1"/>
</dbReference>
<dbReference type="PANTHER" id="PTHR30426:SF0">
    <property type="entry name" value="4-HYDROXY-3-METHYLBUT-2-ENYL DIPHOSPHATE REDUCTASE"/>
    <property type="match status" value="1"/>
</dbReference>
<dbReference type="Pfam" id="PF02401">
    <property type="entry name" value="LYTB"/>
    <property type="match status" value="1"/>
</dbReference>
<accession>Q2A587</accession>
<gene>
    <name evidence="1" type="primary">ispH</name>
    <name type="ordered locus">FTL_0327</name>
</gene>
<proteinExistence type="inferred from homology"/>
<name>ISPH_FRATH</name>
<keyword id="KW-0004">4Fe-4S</keyword>
<keyword id="KW-0408">Iron</keyword>
<keyword id="KW-0411">Iron-sulfur</keyword>
<keyword id="KW-0414">Isoprene biosynthesis</keyword>
<keyword id="KW-0479">Metal-binding</keyword>
<keyword id="KW-0560">Oxidoreductase</keyword>
<keyword id="KW-1185">Reference proteome</keyword>